<organism>
    <name type="scientific">Yellow fever virus (isolate Ivory Coast/85-82H/1982)</name>
    <name type="common">YFV</name>
    <dbReference type="NCBI Taxonomy" id="407138"/>
    <lineage>
        <taxon>Viruses</taxon>
        <taxon>Riboviria</taxon>
        <taxon>Orthornavirae</taxon>
        <taxon>Kitrinoviricota</taxon>
        <taxon>Flasuviricetes</taxon>
        <taxon>Amarillovirales</taxon>
        <taxon>Flaviviridae</taxon>
        <taxon>Orthoflavivirus</taxon>
        <taxon>Orthoflavivirus flavi</taxon>
    </lineage>
</organism>
<protein>
    <recommendedName>
        <fullName>Genome polyprotein</fullName>
    </recommendedName>
    <component>
        <recommendedName>
            <fullName>Capsid protein C</fullName>
        </recommendedName>
        <alternativeName>
            <fullName>Core protein</fullName>
        </alternativeName>
    </component>
    <component>
        <recommendedName>
            <fullName>Protein prM</fullName>
        </recommendedName>
    </component>
    <component>
        <recommendedName>
            <fullName>Peptide pr</fullName>
        </recommendedName>
    </component>
    <component>
        <recommendedName>
            <fullName>Small envelope protein M</fullName>
        </recommendedName>
        <alternativeName>
            <fullName>Matrix protein</fullName>
        </alternativeName>
    </component>
    <component>
        <recommendedName>
            <fullName>Envelope protein E</fullName>
        </recommendedName>
    </component>
    <component>
        <recommendedName>
            <fullName>Non-structural protein 1</fullName>
            <shortName>NS1</shortName>
        </recommendedName>
    </component>
    <component>
        <recommendedName>
            <fullName>Non-structural protein 2A</fullName>
            <shortName>NS2A</shortName>
        </recommendedName>
    </component>
    <component>
        <recommendedName>
            <fullName>Non-structural protein 2A-alpha</fullName>
            <shortName>NS2A-alpha</shortName>
        </recommendedName>
    </component>
    <component>
        <recommendedName>
            <fullName>Serine protease subunit NS2B</fullName>
        </recommendedName>
        <alternativeName>
            <fullName>Flavivirin protease NS2B regulatory subunit</fullName>
        </alternativeName>
        <alternativeName>
            <fullName>Non-structural protein 2B</fullName>
        </alternativeName>
    </component>
    <component>
        <recommendedName>
            <fullName>Serine protease NS3</fullName>
            <ecNumber>3.4.21.91</ecNumber>
            <ecNumber evidence="10">3.6.1.15</ecNumber>
            <ecNumber evidence="10">3.6.4.13</ecNumber>
        </recommendedName>
        <alternativeName>
            <fullName>Flavivirin protease NS3 catalytic subunit</fullName>
        </alternativeName>
        <alternativeName>
            <fullName>Non-structural protein 3</fullName>
        </alternativeName>
    </component>
    <component>
        <recommendedName>
            <fullName>Non-structural protein 4A</fullName>
            <shortName>NS4A</shortName>
        </recommendedName>
    </component>
    <component>
        <recommendedName>
            <fullName>Peptide 2k</fullName>
        </recommendedName>
    </component>
    <component>
        <recommendedName>
            <fullName>Non-structural protein 4B</fullName>
            <shortName>NS4B</shortName>
        </recommendedName>
    </component>
    <component>
        <recommendedName>
            <fullName>RNA-directed RNA polymerase NS5</fullName>
            <ecNumber evidence="16">2.1.1.56</ecNumber>
            <ecNumber evidence="16">2.1.1.57</ecNumber>
            <ecNumber evidence="12">2.7.7.48</ecNumber>
        </recommendedName>
        <alternativeName>
            <fullName>Non-structural protein 5</fullName>
        </alternativeName>
    </component>
</protein>
<sequence length="3411" mass="379172">MSGRKAQGKTLGVNMVRRGVRSLSNKIKQKTKQIGNRPGPSRGVQGFISFFSFNILTGKKITAHLKRLWKMLDPRQGLAVLRKVKRVVAGLMRGLSSRKRRSHDVLTVQFLILGMLLMAGGVTLVRKNRWLLLNVTSEDLGKTFSVGTGNCTTNILEAKYWCPDSMEYNCPNLSPREEPDDIDCWCYGVENVRVAYGKCDSAGRSRRSRRAIDLPTHENHGLKTRQEKWMTGRMGERQLQKIERWLVRNPFFAVTALAIAYLVGSNMTQRVVIALLVLAVGPAYSAHCIGITDRDFIEGVHGGTWVSATLEQDKCVTVMAPDKPSLDISLETVAIDGPAEARKVCYNAVLTHVKINDKCPSTGEAHLAEENEGDNACKRTYSDRGWGNGCGLFGKGSIVACAKFTCAKSMSLFEVDQTKIQYVIRAQLHVGAKQENWNTDIKTLKFDALSGSQEAEFTGYGKATLECRVQTAVDFGNSYIAEMEKESWIVDRQWAQDLTLPWQSGSGGVWREMHHLVEFEPPHAATIRVLALGNQEGSLKTALTGAMRVTKDTNDNNLYKLHGGHVSCRVKLSALTLKGTSYKMCTDKMSFVKNPTDTDHGTVVMQVKVPKGAPCKIPVIVADDLTAAINKGILVTVNPIASTNDDEVLIEVNPPFGDSYIIVGTGDSRLTYQWHKEGSSIGKLFTQTMKGAERLAVMGDAAWDFSSAGGLFTSIGKGSHTVFGSAFQGLFGGLSWITKVIMGAVLIWVGINTRNMTMSMSMILVGVIMMFLSLGVGADQGCAINFGKRELKCGDGIFIFRDSDDWLNKYSYYPEDPVKLASIVKASFEEGKCGLNSVDSLDHEMWRSRADEINAILEENEVDISVVVQDPKNVYQRGTHPFSRIRDGLQYGWKTWGKNLVFSPGRKNGSFIIDGKSRKECPFSNRVWNSFQIEEFGTGVFTTRVYMDAVFEYTIDCDGSILGAAVNGKKSAHGSPTFWMGSHEVNGTWMIHTLETLDYKECEWPLTHTIGTSVEESDMFMPRSIGGPVSSHNHIPGYKVQTNGPWMQVPLEVKREACPGTSVIIDGNCDGRGKSTRSTTDSGKIIPEWCCRSCTMPPVSFHGNDGCWYPMEIRPRKTHESHLVRSWVTAGEIHAVPFGLVSMMIAMEVVLRKRQGPKQMLVGGMVLLGAMLVGQVTLLDLLKLTMAVGLHFHEMNNGGDAMYMALIAAFSIRPGLLIGFGLRTLWSPRERLVLTLGAAMVEIALGGMMGGLWKYLNAVSLCILTINAVASRKASNTILPLMALLTPVTMAEVRLATMLLCAVVIIGVLHQNSKDTSMQKTIPLVALTLTSYLGLTQPFLGLCAFLATRIFGRRSIPVNEALAAAGLVGVLAGLAFQEMENFLGPIAVGGILMMLVSVAGRVDGLELKKLGEVSWEEEAEISGSSARYDVALSEQGEFKLLSEEKVPWDQVVMTSLALVGAAIHPSALLLVLAGWLFHVKGARRSGDVLWDIPTPKIIEECEHLEDGIYGIFQSTFLGASQRGVGVAQGGVFHTMWHVTRGAFLVRNGKKLIPSWASVKEDLVAYGGSWKLEGRWDGEEEVQLIAAVPGKNVVNVQTKPSLFKVRNGGEIGAVALDYPSGTSGSPIVNRNGEVIGLYGNGILVGDNSFVSAISQTEVKEEGKEELQEIPTMLKKGMTTILDYHPGAGKTRRFLPQILAECARRRLRTLVLAPTRVVLSEMKEAFHGLDVKFHTQAFSAHGSGREVIDAMCHATLTYRMLEPTRIVNWEVIIMDEAHFLDPASIAARGWAAHRARANESATILMTATPPGTSDEFPHSNGEIEDVQTDIPSEPWNTGHDWILADKRPTAWFLPSIRAANVMAASLRKAGKSVVVLNRKTFEKEYPTIKQKKPDFILATDIAEMGANLCVDRVLDCRTAFKPVLVDEGRKVAIKGPLRISASSAAQRRGRIGRNPNRDGDSYYYSEPTSEDNAHHVCWLEASMLLDNMEVRGGMVAPLYGIEGTKTPVSPGEMRLRDDQRRVSRELVRNCDLPVWLSWQVAKAGLKTNDRKWCFDGPKEHEILNDSGETVKCRAPGGAKRPLRPRWCDERVSSDQSALADFIKFAEGRRGAAEILVVLSELPDFLAKKGGEAMDTISVFLHSEEGSRAYRNALSMMPEAMTIVMLFILAGLLTSGMVIFFMSPKGISRMSMAMGTMAGCGYLMFLGGAKPTHISYIMLIFFVLMVVVIPEPGQQRSIQDNQVAYLIIGILTLVSVVAANELGMLERTKEDLFGKKNLIPSSASPWSWPDLDLKPGAAWTVYVGIVTILSPMLHHWIKVEYGNLSLSGIAQSASVLSFMDKGIPFMKMNISVIILLVSGWNSITVMPLLCGIGCAMLHWTLILPGIKAQQSKLPQRRVFHGVAKNPVVDGNPTVDIEEAPEMPALYEKKLALYLLLALSLASVAMCRTPFSLAEGIVLASAALGPLIEGNTSLLWNGPMAVSMTGVMRGNYYAFVGVMYNLWKMETGRRGRANGKTLGEVWKRELNLLDRQQFELYKRTDIVEVDRDTARRHLAEGKVDTGVAVSRGTAKLRWFHERGYVKLEGRVTDLGCGRGGWCYYAAAQKEVSGVKGFTLGREGHEKPMNVRSLGWNIITFKDKTDIHHLEPVKCDTLLCDIGESSSSSVTEGERTMRVLDTVEKWLACGVDNFCVKVLAPYMPDVLEKLELLQRRFGGTVIRNPLSRNSTHEMYYVSGARSNVTFTVNQTSRLLMRRMRRPTGKVTLEADVILPIGTRSVETDKGPLNREAIEERVERIKSEYMTTWFYDNDNPYRTWHYCGSYVTKTSGSAASMVNGVIKILTYPWDRIEEVTRMAMTDTTPFGQQRVFKEKVDTRAKDPPAGTRKIMKVVNRWLFRHLAREKNPRLCTKEEFIAKVRSHAAIGAYLEEQEQWKTANEAVQDPKFWELVDEERRLHQQGRCRTCVYNMMGKREKKLSEFGKAKGSRAIWYMWLGARYLEFEALGFLNEDHWASRENSGGGVEGIGLQYLGYVIRDLAAMDGGGFYADDTAGWDTRITEADLDDEQEILNYMSSHHKKLAQAVMEMTYKNKVVKVLRPTPGGKAYMDVISRRDQRGSGQVVTYALNTITNLKVQLIRMAEAEMVIHHHHVQDCDDSTLVRLEAWLIEHGCDRLNRMAVNGDDCVVRPIDDRFGMALSHLNAMSKVRKDISEWQPSKGWNDWENVPFCSHHFHELQLKDGRRIVVPCREQDELIGRGRVSPGNGWMIKETACLSKAYANMWSLMYFHKRDMRLLSLAVSSAVPTSWVPQGRTTWSIHGKGEWMTTEDMLEVWNRVWITNNPHMQDKTVVKEWRDVPYLTKRQDKLCGSLIGMTNRATWASHIHLVIHRIRTLIGQEKYTDYLTVMDRYSVDADLQPGELI</sequence>
<evidence type="ECO:0000250" key="1"/>
<evidence type="ECO:0000250" key="2">
    <source>
        <dbReference type="UniProtKB" id="P03314"/>
    </source>
</evidence>
<evidence type="ECO:0000250" key="3">
    <source>
        <dbReference type="UniProtKB" id="P14335"/>
    </source>
</evidence>
<evidence type="ECO:0000250" key="4">
    <source>
        <dbReference type="UniProtKB" id="P14336"/>
    </source>
</evidence>
<evidence type="ECO:0000250" key="5">
    <source>
        <dbReference type="UniProtKB" id="P14340"/>
    </source>
</evidence>
<evidence type="ECO:0000250" key="6">
    <source>
        <dbReference type="UniProtKB" id="P17763"/>
    </source>
</evidence>
<evidence type="ECO:0000250" key="7">
    <source>
        <dbReference type="UniProtKB" id="P29990"/>
    </source>
</evidence>
<evidence type="ECO:0000250" key="8">
    <source>
        <dbReference type="UniProtKB" id="Q32ZE1"/>
    </source>
</evidence>
<evidence type="ECO:0000250" key="9">
    <source>
        <dbReference type="UniProtKB" id="Q6YMS4"/>
    </source>
</evidence>
<evidence type="ECO:0000250" key="10">
    <source>
        <dbReference type="UniProtKB" id="Q9Q6P4"/>
    </source>
</evidence>
<evidence type="ECO:0000255" key="11"/>
<evidence type="ECO:0000255" key="12">
    <source>
        <dbReference type="PROSITE-ProRule" id="PRU00539"/>
    </source>
</evidence>
<evidence type="ECO:0000255" key="13">
    <source>
        <dbReference type="PROSITE-ProRule" id="PRU00541"/>
    </source>
</evidence>
<evidence type="ECO:0000255" key="14">
    <source>
        <dbReference type="PROSITE-ProRule" id="PRU00859"/>
    </source>
</evidence>
<evidence type="ECO:0000255" key="15">
    <source>
        <dbReference type="PROSITE-ProRule" id="PRU00860"/>
    </source>
</evidence>
<evidence type="ECO:0000255" key="16">
    <source>
        <dbReference type="PROSITE-ProRule" id="PRU00924"/>
    </source>
</evidence>
<evidence type="ECO:0000305" key="17"/>
<accession>Q98803</accession>
<proteinExistence type="inferred from homology"/>
<name>POLG_YEFVI</name>
<dbReference type="EC" id="3.4.21.91"/>
<dbReference type="EC" id="3.6.1.15" evidence="10"/>
<dbReference type="EC" id="3.6.4.13" evidence="10"/>
<dbReference type="EC" id="2.1.1.56" evidence="16"/>
<dbReference type="EC" id="2.1.1.57" evidence="16"/>
<dbReference type="EC" id="2.7.7.48" evidence="12"/>
<dbReference type="EMBL" id="U54798">
    <property type="protein sequence ID" value="AAA99812.1"/>
    <property type="molecule type" value="Genomic_RNA"/>
</dbReference>
<dbReference type="SMR" id="Q98803"/>
<dbReference type="MEROPS" id="S07.001"/>
<dbReference type="Proteomes" id="UP000008606">
    <property type="component" value="Genome"/>
</dbReference>
<dbReference type="GO" id="GO:0005576">
    <property type="term" value="C:extracellular region"/>
    <property type="evidence" value="ECO:0007669"/>
    <property type="project" value="UniProtKB-SubCell"/>
</dbReference>
<dbReference type="GO" id="GO:0044167">
    <property type="term" value="C:host cell endoplasmic reticulum membrane"/>
    <property type="evidence" value="ECO:0007669"/>
    <property type="project" value="UniProtKB-SubCell"/>
</dbReference>
<dbReference type="GO" id="GO:0042025">
    <property type="term" value="C:host cell nucleus"/>
    <property type="evidence" value="ECO:0007669"/>
    <property type="project" value="UniProtKB-SubCell"/>
</dbReference>
<dbReference type="GO" id="GO:0044220">
    <property type="term" value="C:host cell perinuclear region of cytoplasm"/>
    <property type="evidence" value="ECO:0007669"/>
    <property type="project" value="UniProtKB-SubCell"/>
</dbReference>
<dbReference type="GO" id="GO:0016020">
    <property type="term" value="C:membrane"/>
    <property type="evidence" value="ECO:0007669"/>
    <property type="project" value="UniProtKB-KW"/>
</dbReference>
<dbReference type="GO" id="GO:0019028">
    <property type="term" value="C:viral capsid"/>
    <property type="evidence" value="ECO:0007669"/>
    <property type="project" value="UniProtKB-KW"/>
</dbReference>
<dbReference type="GO" id="GO:0019031">
    <property type="term" value="C:viral envelope"/>
    <property type="evidence" value="ECO:0007669"/>
    <property type="project" value="UniProtKB-KW"/>
</dbReference>
<dbReference type="GO" id="GO:0055036">
    <property type="term" value="C:virion membrane"/>
    <property type="evidence" value="ECO:0007669"/>
    <property type="project" value="UniProtKB-SubCell"/>
</dbReference>
<dbReference type="GO" id="GO:0005524">
    <property type="term" value="F:ATP binding"/>
    <property type="evidence" value="ECO:0007669"/>
    <property type="project" value="UniProtKB-KW"/>
</dbReference>
<dbReference type="GO" id="GO:0016887">
    <property type="term" value="F:ATP hydrolysis activity"/>
    <property type="evidence" value="ECO:0007669"/>
    <property type="project" value="RHEA"/>
</dbReference>
<dbReference type="GO" id="GO:0003725">
    <property type="term" value="F:double-stranded RNA binding"/>
    <property type="evidence" value="ECO:0007669"/>
    <property type="project" value="InterPro"/>
</dbReference>
<dbReference type="GO" id="GO:0005525">
    <property type="term" value="F:GTP binding"/>
    <property type="evidence" value="ECO:0007669"/>
    <property type="project" value="UniProtKB-KW"/>
</dbReference>
<dbReference type="GO" id="GO:0046872">
    <property type="term" value="F:metal ion binding"/>
    <property type="evidence" value="ECO:0007669"/>
    <property type="project" value="UniProtKB-KW"/>
</dbReference>
<dbReference type="GO" id="GO:0004483">
    <property type="term" value="F:mRNA (nucleoside-2'-O-)-methyltransferase activity"/>
    <property type="evidence" value="ECO:0007669"/>
    <property type="project" value="UniProtKB-EC"/>
</dbReference>
<dbReference type="GO" id="GO:0004482">
    <property type="term" value="F:mRNA 5'-cap (guanine-N7-)-methyltransferase activity"/>
    <property type="evidence" value="ECO:0007669"/>
    <property type="project" value="UniProtKB-EC"/>
</dbReference>
<dbReference type="GO" id="GO:0046983">
    <property type="term" value="F:protein dimerization activity"/>
    <property type="evidence" value="ECO:0007669"/>
    <property type="project" value="InterPro"/>
</dbReference>
<dbReference type="GO" id="GO:0003724">
    <property type="term" value="F:RNA helicase activity"/>
    <property type="evidence" value="ECO:0007669"/>
    <property type="project" value="UniProtKB-EC"/>
</dbReference>
<dbReference type="GO" id="GO:0003968">
    <property type="term" value="F:RNA-directed RNA polymerase activity"/>
    <property type="evidence" value="ECO:0007669"/>
    <property type="project" value="UniProtKB-KW"/>
</dbReference>
<dbReference type="GO" id="GO:0004252">
    <property type="term" value="F:serine-type endopeptidase activity"/>
    <property type="evidence" value="ECO:0007669"/>
    <property type="project" value="InterPro"/>
</dbReference>
<dbReference type="GO" id="GO:0005198">
    <property type="term" value="F:structural molecule activity"/>
    <property type="evidence" value="ECO:0007669"/>
    <property type="project" value="InterPro"/>
</dbReference>
<dbReference type="GO" id="GO:0075512">
    <property type="term" value="P:clathrin-dependent endocytosis of virus by host cell"/>
    <property type="evidence" value="ECO:0007669"/>
    <property type="project" value="UniProtKB-KW"/>
</dbReference>
<dbReference type="GO" id="GO:0039654">
    <property type="term" value="P:fusion of virus membrane with host endosome membrane"/>
    <property type="evidence" value="ECO:0007669"/>
    <property type="project" value="UniProtKB-KW"/>
</dbReference>
<dbReference type="GO" id="GO:0006508">
    <property type="term" value="P:proteolysis"/>
    <property type="evidence" value="ECO:0007669"/>
    <property type="project" value="UniProtKB-KW"/>
</dbReference>
<dbReference type="GO" id="GO:0039520">
    <property type="term" value="P:symbiont-mediated activation of host autophagy"/>
    <property type="evidence" value="ECO:0007669"/>
    <property type="project" value="UniProtKB-KW"/>
</dbReference>
<dbReference type="GO" id="GO:0052170">
    <property type="term" value="P:symbiont-mediated suppression of host innate immune response"/>
    <property type="evidence" value="ECO:0007669"/>
    <property type="project" value="UniProtKB-KW"/>
</dbReference>
<dbReference type="GO" id="GO:0039564">
    <property type="term" value="P:symbiont-mediated suppression of host JAK-STAT cascade via inhibition of STAT2 activity"/>
    <property type="evidence" value="ECO:0007669"/>
    <property type="project" value="UniProtKB-KW"/>
</dbReference>
<dbReference type="GO" id="GO:0039502">
    <property type="term" value="P:symbiont-mediated suppression of host type I interferon-mediated signaling pathway"/>
    <property type="evidence" value="ECO:0007669"/>
    <property type="project" value="UniProtKB-KW"/>
</dbReference>
<dbReference type="GO" id="GO:0039694">
    <property type="term" value="P:viral RNA genome replication"/>
    <property type="evidence" value="ECO:0007669"/>
    <property type="project" value="InterPro"/>
</dbReference>
<dbReference type="GO" id="GO:0019062">
    <property type="term" value="P:virion attachment to host cell"/>
    <property type="evidence" value="ECO:0007669"/>
    <property type="project" value="UniProtKB-KW"/>
</dbReference>
<dbReference type="CDD" id="cd20761">
    <property type="entry name" value="capping_2-OMTase_Flaviviridae"/>
    <property type="match status" value="1"/>
</dbReference>
<dbReference type="CDD" id="cd17931">
    <property type="entry name" value="DEXHc_viral_Ns3"/>
    <property type="match status" value="1"/>
</dbReference>
<dbReference type="CDD" id="cd12149">
    <property type="entry name" value="Flavi_E_C"/>
    <property type="match status" value="1"/>
</dbReference>
<dbReference type="CDD" id="cd17038">
    <property type="entry name" value="Flavi_M"/>
    <property type="match status" value="1"/>
</dbReference>
<dbReference type="CDD" id="cd23204">
    <property type="entry name" value="Flavivirus_RdRp"/>
    <property type="match status" value="1"/>
</dbReference>
<dbReference type="FunFam" id="1.20.1280.260:FF:000001">
    <property type="entry name" value="Envelope glycoprotein"/>
    <property type="match status" value="1"/>
</dbReference>
<dbReference type="FunFam" id="1.10.260.90:FF:000001">
    <property type="entry name" value="Genome polyprotein"/>
    <property type="match status" value="1"/>
</dbReference>
<dbReference type="FunFam" id="2.40.10.120:FF:000006">
    <property type="entry name" value="Genome polyprotein"/>
    <property type="match status" value="1"/>
</dbReference>
<dbReference type="FunFam" id="2.60.260.50:FF:000001">
    <property type="entry name" value="Genome polyprotein"/>
    <property type="match status" value="1"/>
</dbReference>
<dbReference type="FunFam" id="3.30.70.2840:FF:000001">
    <property type="entry name" value="Genome polyprotein"/>
    <property type="match status" value="1"/>
</dbReference>
<dbReference type="FunFam" id="3.30.70.2840:FF:000002">
    <property type="entry name" value="Genome polyprotein"/>
    <property type="match status" value="1"/>
</dbReference>
<dbReference type="FunFam" id="3.40.50.150:FF:000105">
    <property type="entry name" value="Genome polyprotein"/>
    <property type="match status" value="1"/>
</dbReference>
<dbReference type="FunFam" id="3.40.50.300:FF:000763">
    <property type="entry name" value="Genome polyprotein"/>
    <property type="match status" value="1"/>
</dbReference>
<dbReference type="Gene3D" id="1.10.10.930">
    <property type="match status" value="1"/>
</dbReference>
<dbReference type="Gene3D" id="1.10.260.90">
    <property type="match status" value="1"/>
</dbReference>
<dbReference type="Gene3D" id="1.20.1280.260">
    <property type="match status" value="1"/>
</dbReference>
<dbReference type="Gene3D" id="2.40.10.120">
    <property type="match status" value="2"/>
</dbReference>
<dbReference type="Gene3D" id="2.60.40.350">
    <property type="match status" value="1"/>
</dbReference>
<dbReference type="Gene3D" id="1.10.8.970">
    <property type="entry name" value="Flavivirus envelope glycoprotein M-like"/>
    <property type="match status" value="1"/>
</dbReference>
<dbReference type="Gene3D" id="2.60.260.50">
    <property type="entry name" value="Flavivirus polyprotein propeptide domain"/>
    <property type="match status" value="1"/>
</dbReference>
<dbReference type="Gene3D" id="3.30.70.2840">
    <property type="entry name" value="Flavivirus RNA-directed RNA polymerase, thumb domain"/>
    <property type="match status" value="3"/>
</dbReference>
<dbReference type="Gene3D" id="3.40.50.300">
    <property type="entry name" value="P-loop containing nucleotide triphosphate hydrolases"/>
    <property type="match status" value="2"/>
</dbReference>
<dbReference type="Gene3D" id="2.60.98.10">
    <property type="entry name" value="Tick-borne Encephalitis virus Glycoprotein, domain 1"/>
    <property type="match status" value="1"/>
</dbReference>
<dbReference type="Gene3D" id="3.40.50.150">
    <property type="entry name" value="Vaccinia Virus protein VP39"/>
    <property type="match status" value="1"/>
</dbReference>
<dbReference type="Gene3D" id="3.30.67.10">
    <property type="entry name" value="Viral Envelope Glycoprotein, domain 2"/>
    <property type="match status" value="1"/>
</dbReference>
<dbReference type="Gene3D" id="3.30.387.10">
    <property type="entry name" value="Viral Envelope Glycoprotein, domain 3"/>
    <property type="match status" value="1"/>
</dbReference>
<dbReference type="InterPro" id="IPR043502">
    <property type="entry name" value="DNA/RNA_pol_sf"/>
</dbReference>
<dbReference type="InterPro" id="IPR000069">
    <property type="entry name" value="Env_glycoprot_M_flavivir"/>
</dbReference>
<dbReference type="InterPro" id="IPR038302">
    <property type="entry name" value="Env_glycoprot_M_sf_flavivir"/>
</dbReference>
<dbReference type="InterPro" id="IPR013755">
    <property type="entry name" value="Flav_gly_cen_dom_subdom1"/>
</dbReference>
<dbReference type="InterPro" id="IPR001122">
    <property type="entry name" value="Flavi_capsidC"/>
</dbReference>
<dbReference type="InterPro" id="IPR037172">
    <property type="entry name" value="Flavi_capsidC_sf"/>
</dbReference>
<dbReference type="InterPro" id="IPR011492">
    <property type="entry name" value="Flavi_DEAD"/>
</dbReference>
<dbReference type="InterPro" id="IPR027287">
    <property type="entry name" value="Flavi_E_Ig-like"/>
</dbReference>
<dbReference type="InterPro" id="IPR026470">
    <property type="entry name" value="Flavi_E_Stem/Anchor_dom"/>
</dbReference>
<dbReference type="InterPro" id="IPR038345">
    <property type="entry name" value="Flavi_E_Stem/Anchor_dom_sf"/>
</dbReference>
<dbReference type="InterPro" id="IPR011998">
    <property type="entry name" value="Flavi_Glycoprot_E_cen/dimer"/>
</dbReference>
<dbReference type="InterPro" id="IPR001157">
    <property type="entry name" value="Flavi_NS1"/>
</dbReference>
<dbReference type="InterPro" id="IPR000752">
    <property type="entry name" value="Flavi_NS2A"/>
</dbReference>
<dbReference type="InterPro" id="IPR000487">
    <property type="entry name" value="Flavi_NS2B"/>
</dbReference>
<dbReference type="InterPro" id="IPR001850">
    <property type="entry name" value="Flavi_NS3_S7"/>
</dbReference>
<dbReference type="InterPro" id="IPR000404">
    <property type="entry name" value="Flavi_NS4A"/>
</dbReference>
<dbReference type="InterPro" id="IPR001528">
    <property type="entry name" value="Flavi_NS4B"/>
</dbReference>
<dbReference type="InterPro" id="IPR046811">
    <property type="entry name" value="Flavi_NS5_thumb"/>
</dbReference>
<dbReference type="InterPro" id="IPR002535">
    <property type="entry name" value="Flavi_propep"/>
</dbReference>
<dbReference type="InterPro" id="IPR038688">
    <property type="entry name" value="Flavi_propep_sf"/>
</dbReference>
<dbReference type="InterPro" id="IPR047530">
    <property type="entry name" value="Flavi_RdRp"/>
</dbReference>
<dbReference type="InterPro" id="IPR000208">
    <property type="entry name" value="Flavi_RdRp_fingers/palm"/>
</dbReference>
<dbReference type="InterPro" id="IPR000336">
    <property type="entry name" value="Flavivir/Alphavir_Ig-like_sf"/>
</dbReference>
<dbReference type="InterPro" id="IPR014412">
    <property type="entry name" value="Gen_Poly_FLV"/>
</dbReference>
<dbReference type="InterPro" id="IPR036253">
    <property type="entry name" value="Glycoprot_cen/dimer_sf"/>
</dbReference>
<dbReference type="InterPro" id="IPR038055">
    <property type="entry name" value="Glycoprot_E_dimer_dom"/>
</dbReference>
<dbReference type="InterPro" id="IPR013756">
    <property type="entry name" value="GlyE_cen_dom_subdom2"/>
</dbReference>
<dbReference type="InterPro" id="IPR014001">
    <property type="entry name" value="Helicase_ATP-bd"/>
</dbReference>
<dbReference type="InterPro" id="IPR001650">
    <property type="entry name" value="Helicase_C-like"/>
</dbReference>
<dbReference type="InterPro" id="IPR014756">
    <property type="entry name" value="Ig_E-set"/>
</dbReference>
<dbReference type="InterPro" id="IPR026490">
    <property type="entry name" value="mRNA_cap_0/1_MeTrfase"/>
</dbReference>
<dbReference type="InterPro" id="IPR049486">
    <property type="entry name" value="NS3-hel_C_flaviviridae"/>
</dbReference>
<dbReference type="InterPro" id="IPR027417">
    <property type="entry name" value="P-loop_NTPase"/>
</dbReference>
<dbReference type="InterPro" id="IPR009003">
    <property type="entry name" value="Peptidase_S1_PA"/>
</dbReference>
<dbReference type="InterPro" id="IPR007094">
    <property type="entry name" value="RNA-dir_pol_PSvirus"/>
</dbReference>
<dbReference type="InterPro" id="IPR002877">
    <property type="entry name" value="RNA_MeTrfase_FtsJ_dom"/>
</dbReference>
<dbReference type="InterPro" id="IPR029063">
    <property type="entry name" value="SAM-dependent_MTases_sf"/>
</dbReference>
<dbReference type="NCBIfam" id="TIGR04240">
    <property type="entry name" value="flavi_E_stem"/>
    <property type="match status" value="1"/>
</dbReference>
<dbReference type="Pfam" id="PF20907">
    <property type="entry name" value="Flav_NS3-hel_C"/>
    <property type="match status" value="1"/>
</dbReference>
<dbReference type="Pfam" id="PF01003">
    <property type="entry name" value="Flavi_capsid"/>
    <property type="match status" value="1"/>
</dbReference>
<dbReference type="Pfam" id="PF07652">
    <property type="entry name" value="Flavi_DEAD"/>
    <property type="match status" value="1"/>
</dbReference>
<dbReference type="Pfam" id="PF21659">
    <property type="entry name" value="Flavi_E_stem"/>
    <property type="match status" value="1"/>
</dbReference>
<dbReference type="Pfam" id="PF02832">
    <property type="entry name" value="Flavi_glycop_C"/>
    <property type="match status" value="1"/>
</dbReference>
<dbReference type="Pfam" id="PF00869">
    <property type="entry name" value="Flavi_glycoprot"/>
    <property type="match status" value="1"/>
</dbReference>
<dbReference type="Pfam" id="PF01004">
    <property type="entry name" value="Flavi_M"/>
    <property type="match status" value="1"/>
</dbReference>
<dbReference type="Pfam" id="PF00948">
    <property type="entry name" value="Flavi_NS1"/>
    <property type="match status" value="1"/>
</dbReference>
<dbReference type="Pfam" id="PF01005">
    <property type="entry name" value="Flavi_NS2A"/>
    <property type="match status" value="1"/>
</dbReference>
<dbReference type="Pfam" id="PF01002">
    <property type="entry name" value="Flavi_NS2B"/>
    <property type="match status" value="1"/>
</dbReference>
<dbReference type="Pfam" id="PF01350">
    <property type="entry name" value="Flavi_NS4A"/>
    <property type="match status" value="1"/>
</dbReference>
<dbReference type="Pfam" id="PF01349">
    <property type="entry name" value="Flavi_NS4B"/>
    <property type="match status" value="1"/>
</dbReference>
<dbReference type="Pfam" id="PF00972">
    <property type="entry name" value="Flavi_NS5"/>
    <property type="match status" value="1"/>
</dbReference>
<dbReference type="Pfam" id="PF20483">
    <property type="entry name" value="Flavi_NS5_thumb"/>
    <property type="match status" value="1"/>
</dbReference>
<dbReference type="Pfam" id="PF01570">
    <property type="entry name" value="Flavi_propep"/>
    <property type="match status" value="1"/>
</dbReference>
<dbReference type="Pfam" id="PF01728">
    <property type="entry name" value="FtsJ"/>
    <property type="match status" value="1"/>
</dbReference>
<dbReference type="Pfam" id="PF00949">
    <property type="entry name" value="Peptidase_S7"/>
    <property type="match status" value="1"/>
</dbReference>
<dbReference type="PIRSF" id="PIRSF003817">
    <property type="entry name" value="Gen_Poly_FLV"/>
    <property type="match status" value="1"/>
</dbReference>
<dbReference type="SMART" id="SM00487">
    <property type="entry name" value="DEXDc"/>
    <property type="match status" value="1"/>
</dbReference>
<dbReference type="SMART" id="SM00490">
    <property type="entry name" value="HELICc"/>
    <property type="match status" value="1"/>
</dbReference>
<dbReference type="SUPFAM" id="SSF56672">
    <property type="entry name" value="DNA/RNA polymerases"/>
    <property type="match status" value="1"/>
</dbReference>
<dbReference type="SUPFAM" id="SSF81296">
    <property type="entry name" value="E set domains"/>
    <property type="match status" value="1"/>
</dbReference>
<dbReference type="SUPFAM" id="SSF52540">
    <property type="entry name" value="P-loop containing nucleoside triphosphate hydrolases"/>
    <property type="match status" value="2"/>
</dbReference>
<dbReference type="SUPFAM" id="SSF53335">
    <property type="entry name" value="S-adenosyl-L-methionine-dependent methyltransferases"/>
    <property type="match status" value="1"/>
</dbReference>
<dbReference type="SUPFAM" id="SSF50494">
    <property type="entry name" value="Trypsin-like serine proteases"/>
    <property type="match status" value="1"/>
</dbReference>
<dbReference type="SUPFAM" id="SSF56983">
    <property type="entry name" value="Viral glycoprotein, central and dimerisation domains"/>
    <property type="match status" value="1"/>
</dbReference>
<dbReference type="PROSITE" id="PS51527">
    <property type="entry name" value="FLAVIVIRUS_NS2B"/>
    <property type="match status" value="1"/>
</dbReference>
<dbReference type="PROSITE" id="PS51528">
    <property type="entry name" value="FLAVIVIRUS_NS3PRO"/>
    <property type="match status" value="1"/>
</dbReference>
<dbReference type="PROSITE" id="PS51192">
    <property type="entry name" value="HELICASE_ATP_BIND_1"/>
    <property type="match status" value="1"/>
</dbReference>
<dbReference type="PROSITE" id="PS51194">
    <property type="entry name" value="HELICASE_CTER"/>
    <property type="match status" value="1"/>
</dbReference>
<dbReference type="PROSITE" id="PS50507">
    <property type="entry name" value="RDRP_SSRNA_POS"/>
    <property type="match status" value="1"/>
</dbReference>
<dbReference type="PROSITE" id="PS51591">
    <property type="entry name" value="RNA_CAP01_NS5_MT"/>
    <property type="match status" value="1"/>
</dbReference>
<reference key="1">
    <citation type="journal article" date="1997" name="Virus Genes">
        <title>Homogeneity of yellow fever virus strains isolated during an epidemic and a post-epidemic period in West Africa.</title>
        <authorList>
            <person name="Pisano M.R."/>
            <person name="Nicoli J."/>
            <person name="Tolou H."/>
        </authorList>
    </citation>
    <scope>NUCLEOTIDE SEQUENCE [GENOMIC RNA]</scope>
</reference>
<comment type="function">
    <molecule>Capsid protein C</molecule>
    <text evidence="6">Plays a role in virus budding by binding to the cell membrane and gathering the viral RNA into a nucleocapsid that forms the core of a mature virus particle. During virus entry, may induce genome penetration into the host cytoplasm after hemifusion induced by the surface proteins. Can migrate to the cell nucleus where it modulates host functions.</text>
</comment>
<comment type="function">
    <molecule>Capsid protein C</molecule>
    <text evidence="2">Inhibits RNA silencing by interfering with host Dicer.</text>
</comment>
<comment type="function">
    <molecule>Peptide pr</molecule>
    <text evidence="6">Prevents premature fusion activity of envelope proteins in trans-Golgi by binding to envelope protein E at pH6.0. After virion release in extracellular space, gets dissociated from E dimers.</text>
</comment>
<comment type="function">
    <molecule>Protein prM</molecule>
    <text evidence="6">Acts as a chaperone for envelope protein E during intracellular virion assembly by masking and inactivating envelope protein E fusion peptide. prM is the only viral peptide matured by host furin in the trans-Golgi network probably to avoid catastrophic activation of the viral fusion activity in acidic Golgi compartment prior to virion release. prM-E cleavage is inefficient, and many virions are only partially matured. These uncleaved prM would play a role in immune evasion.</text>
</comment>
<comment type="function">
    <molecule>Small envelope protein M</molecule>
    <text evidence="6">May play a role in virus budding. Exerts cytotoxic effects by activating a mitochondrial apoptotic pathway through M ectodomain. May display a viroporin activity.</text>
</comment>
<comment type="function">
    <molecule>Envelope protein E</molecule>
    <text evidence="6">Binds to host cell surface receptor and mediates fusion between viral and cellular membranes. Envelope protein is synthesized in the endoplasmic reticulum in the form of heterodimer with protein prM. They play a role in virion budding in the ER, and the newly formed immature particle is covered with 60 spikes composed of heterodimer between precursor prM and envelope protein E. The virion is transported to the Golgi apparatus where the low pH causes dissociation of PrM-E heterodimers and formation of E homodimers. prM-E cleavage is inefficient, and many virions are only partially matured. These uncleaved prM would play a role in immune evasion.</text>
</comment>
<comment type="function">
    <molecule>Non-structural protein 1</molecule>
    <text evidence="10">Involved in immune evasion, pathogenesis and viral replication. Once cleaved off the polyprotein, is targeted to three destinations: the viral replication cycle, the plasma membrane and the extracellular compartment. Essential for viral replication. Required for formation of the replication complex and recruitment of other non-structural proteins to the ER-derived membrane structures. Excreted as a hexameric lipoparticle that plays a role against host immune response. Antagonizing the complement function. Binds to the host macrophages and dendritic cells. Inhibits signal transduction originating from Toll-like receptor 3 (TLR3).</text>
</comment>
<comment type="function">
    <molecule>Non-structural protein 2A</molecule>
    <text evidence="6">Component of the viral RNA replication complex that functions in virion assembly and antagonizes the host immune response.</text>
</comment>
<comment type="function">
    <molecule>Serine protease subunit NS2B</molecule>
    <text evidence="6 14">Required cofactor for the serine protease function of NS3. May have membrane-destabilizing activity and form viroporins (By similarity).</text>
</comment>
<comment type="function">
    <molecule>Serine protease NS3</molecule>
    <text evidence="2 15">Displays three enzymatic activities: serine protease, NTPase and RNA helicase. NS3 serine protease, in association with NS2B, performs its autocleavage and cleaves the polyprotein at dibasic sites in the cytoplasm: C-prM, NS2A-NS2B, NS2B-NS3, NS3-NS4A, NS4A-2K and NS4B-NS5. NS3 RNA helicase binds RNA and unwinds dsRNA in the 3' to 5' direction. Also plays a role in virus assembly (By similarity).</text>
</comment>
<comment type="function">
    <molecule>Non-structural protein 4A</molecule>
    <text evidence="10">Regulates the ATPase activity of the NS3 helicase activity. NS4A allows NS3 helicase to conserve energy during unwinding.</text>
</comment>
<comment type="function">
    <molecule>Peptide 2k</molecule>
    <text evidence="6">Functions as a signal peptide for NS4B and is required for the interferon antagonism activity of the latter.</text>
</comment>
<comment type="function">
    <molecule>Non-structural protein 4B</molecule>
    <text evidence="10">Induces the formation of ER-derived membrane vesicles where the viral replication takes place. Inhibits interferon (IFN)-induced host STAT1 phosphorylation and nuclear translocation, thereby preventing the establishment of cellular antiviral state by blocking the IFN-alpha/beta pathway.</text>
</comment>
<comment type="function">
    <molecule>RNA-directed RNA polymerase NS5</molecule>
    <text evidence="2">Replicates the viral (+) and (-) RNA genome, and performs the capping of genomes in the cytoplasm. NS5 methylates viral RNA cap at guanine N-7 and ribose 2'-O positions (By similarity). Besides its role in RNA genome replication, also prevents the establishment of cellular antiviral state by blocking the interferon-alpha/beta (IFN-alpha/beta) signaling pathway. IFN-I induces binding of NS5 to host IFN-activated transcription factor STAT2, preventing its transcriptional activity. Host TRIM23 is the E3 ligase that interacts with and polyubiquitinates NS5 to promote its binding to STAT2 and trigger IFN-I signaling inhibition.</text>
</comment>
<comment type="catalytic activity">
    <reaction>
        <text>Selective hydrolysis of -Xaa-Xaa-|-Yaa- bonds in which each of the Xaa can be either Arg or Lys and Yaa can be either Ser or Ala.</text>
        <dbReference type="EC" id="3.4.21.91"/>
    </reaction>
</comment>
<comment type="catalytic activity">
    <reaction evidence="12">
        <text>RNA(n) + a ribonucleoside 5'-triphosphate = RNA(n+1) + diphosphate</text>
        <dbReference type="Rhea" id="RHEA:21248"/>
        <dbReference type="Rhea" id="RHEA-COMP:14527"/>
        <dbReference type="Rhea" id="RHEA-COMP:17342"/>
        <dbReference type="ChEBI" id="CHEBI:33019"/>
        <dbReference type="ChEBI" id="CHEBI:61557"/>
        <dbReference type="ChEBI" id="CHEBI:140395"/>
        <dbReference type="EC" id="2.7.7.48"/>
    </reaction>
</comment>
<comment type="catalytic activity">
    <reaction>
        <text>a ribonucleoside 5'-triphosphate + H2O = a ribonucleoside 5'-diphosphate + phosphate + H(+)</text>
        <dbReference type="Rhea" id="RHEA:23680"/>
        <dbReference type="ChEBI" id="CHEBI:15377"/>
        <dbReference type="ChEBI" id="CHEBI:15378"/>
        <dbReference type="ChEBI" id="CHEBI:43474"/>
        <dbReference type="ChEBI" id="CHEBI:57930"/>
        <dbReference type="ChEBI" id="CHEBI:61557"/>
        <dbReference type="EC" id="3.6.1.15"/>
    </reaction>
</comment>
<comment type="catalytic activity">
    <reaction>
        <text>ATP + H2O = ADP + phosphate + H(+)</text>
        <dbReference type="Rhea" id="RHEA:13065"/>
        <dbReference type="ChEBI" id="CHEBI:15377"/>
        <dbReference type="ChEBI" id="CHEBI:15378"/>
        <dbReference type="ChEBI" id="CHEBI:30616"/>
        <dbReference type="ChEBI" id="CHEBI:43474"/>
        <dbReference type="ChEBI" id="CHEBI:456216"/>
        <dbReference type="EC" id="3.6.4.13"/>
    </reaction>
</comment>
<comment type="catalytic activity">
    <reaction evidence="16">
        <text>a 5'-end (5'-triphosphoguanosine)-ribonucleoside in mRNA + S-adenosyl-L-methionine = a 5'-end (N(7)-methyl 5'-triphosphoguanosine)-ribonucleoside in mRNA + S-adenosyl-L-homocysteine</text>
        <dbReference type="Rhea" id="RHEA:67008"/>
        <dbReference type="Rhea" id="RHEA-COMP:17166"/>
        <dbReference type="Rhea" id="RHEA-COMP:17167"/>
        <dbReference type="ChEBI" id="CHEBI:57856"/>
        <dbReference type="ChEBI" id="CHEBI:59789"/>
        <dbReference type="ChEBI" id="CHEBI:156461"/>
        <dbReference type="ChEBI" id="CHEBI:167617"/>
        <dbReference type="EC" id="2.1.1.56"/>
    </reaction>
</comment>
<comment type="catalytic activity">
    <reaction evidence="16">
        <text>a 5'-end (N(7)-methyl 5'-triphosphoguanosine)-ribonucleoside in mRNA + S-adenosyl-L-methionine = a 5'-end (N(7)-methyl 5'-triphosphoguanosine)-(2'-O-methyl-ribonucleoside) in mRNA + S-adenosyl-L-homocysteine + H(+)</text>
        <dbReference type="Rhea" id="RHEA:67020"/>
        <dbReference type="Rhea" id="RHEA-COMP:17167"/>
        <dbReference type="Rhea" id="RHEA-COMP:17168"/>
        <dbReference type="ChEBI" id="CHEBI:15378"/>
        <dbReference type="ChEBI" id="CHEBI:57856"/>
        <dbReference type="ChEBI" id="CHEBI:59789"/>
        <dbReference type="ChEBI" id="CHEBI:156461"/>
        <dbReference type="ChEBI" id="CHEBI:167609"/>
        <dbReference type="EC" id="2.1.1.57"/>
    </reaction>
</comment>
<comment type="subunit">
    <molecule>Capsid protein C</molecule>
    <text evidence="6">Homodimer (By similarity). Interacts (via N-terminus) with host EXOC1 (via C-terminus); this interaction results in EXOC1 degradation through the proteasome degradation pathway (By similarity).</text>
</comment>
<comment type="subunit">
    <molecule>Protein prM</molecule>
    <text evidence="6">Forms heterodimers with envelope protein E in the endoplasmic reticulum and Golgi.</text>
</comment>
<comment type="subunit">
    <molecule>Envelope protein E</molecule>
    <text evidence="6">Homodimer; in the endoplasmic reticulum and Golgi (By similarity). Interacts with protein prM (By similarity). Interacts with non-structural protein 1 (By similarity).</text>
</comment>
<comment type="subunit">
    <molecule>Non-structural protein 1</molecule>
    <text evidence="6">Homodimer; Homohexamer when secreted (By similarity). Interacts with envelope protein E (By similarity).</text>
</comment>
<comment type="subunit">
    <molecule>Non-structural protein 2A</molecule>
    <text evidence="2">Interacts (via N-terminus) with serine protease NS3.</text>
</comment>
<comment type="subunit">
    <molecule>Serine protease subunit NS2B</molecule>
    <text evidence="6">Forms a heterodimer with serine protease NS3 (By similarity). May form homooligomers (By similarity).</text>
</comment>
<comment type="subunit">
    <molecule>Serine protease NS3</molecule>
    <text evidence="6">Forms a heterodimer with NS2B (By similarity). Interacts with non-structural protein 2A (via N-terminus) (By similarity). Interacts with NS4B (By similarity). Interacts with unphosphorylated RNA-directed RNA polymerase NS5; this interaction stimulates RNA-directed RNA polymerase NS5 guanylyltransferase activity (By similarity). NS3 interacts with host PDCD6IP; this interaction contributes to virion release (By similarity).</text>
</comment>
<comment type="subunit">
    <molecule>Non-structural protein 4B</molecule>
    <text evidence="6">Interacts with serine protease NS3 (By similarity).</text>
</comment>
<comment type="subunit">
    <molecule>RNA-directed RNA polymerase NS5</molecule>
    <text evidence="2">Homodimer (By similarity). Interacts with host STAT2; this interaction prevents the establishment of cellular antiviral state (By similarity). Interacts with serine protease NS3 (By similarity). Interacts with host TRIM23; this interaction leads to NS5 ubiquitination (By similarity).</text>
</comment>
<comment type="subcellular location">
    <molecule>Capsid protein C</molecule>
    <subcellularLocation>
        <location evidence="6">Virion</location>
    </subcellularLocation>
    <subcellularLocation>
        <location evidence="6">Host nucleus</location>
    </subcellularLocation>
    <subcellularLocation>
        <location evidence="6">Host cytoplasm</location>
        <location evidence="6">Host perinuclear region</location>
    </subcellularLocation>
    <subcellularLocation>
        <location evidence="6">Host cytoplasm</location>
    </subcellularLocation>
</comment>
<comment type="subcellular location">
    <molecule>Peptide pr</molecule>
    <subcellularLocation>
        <location evidence="6">Secreted</location>
    </subcellularLocation>
</comment>
<comment type="subcellular location">
    <molecule>Small envelope protein M</molecule>
    <subcellularLocation>
        <location evidence="2">Virion membrane</location>
        <topology evidence="2">Multi-pass membrane protein</topology>
    </subcellularLocation>
    <subcellularLocation>
        <location evidence="2">Host endoplasmic reticulum membrane</location>
        <topology evidence="11">Multi-pass membrane protein</topology>
    </subcellularLocation>
    <text evidence="2">ER membrane retention is mediated by the transmembrane domains.</text>
</comment>
<comment type="subcellular location">
    <molecule>Envelope protein E</molecule>
    <subcellularLocation>
        <location evidence="17">Virion membrane</location>
        <topology evidence="2">Multi-pass membrane protein</topology>
    </subcellularLocation>
    <subcellularLocation>
        <location evidence="2">Host endoplasmic reticulum membrane</location>
        <topology evidence="11">Multi-pass membrane protein</topology>
    </subcellularLocation>
    <text evidence="2">ER membrane retention is mediated by the transmembrane domains.</text>
</comment>
<comment type="subcellular location">
    <molecule>Non-structural protein 1</molecule>
    <subcellularLocation>
        <location evidence="6">Secreted</location>
    </subcellularLocation>
    <subcellularLocation>
        <location>Host endoplasmic reticulum membrane</location>
        <topology>Peripheral membrane protein</topology>
        <orientation evidence="6">Lumenal side</orientation>
    </subcellularLocation>
    <text evidence="10">Located in RE-derived vesicles hosting the replication complex.</text>
</comment>
<comment type="subcellular location">
    <molecule>Non-structural protein 2A</molecule>
    <subcellularLocation>
        <location evidence="6">Host endoplasmic reticulum membrane</location>
        <topology evidence="6">Multi-pass membrane protein</topology>
    </subcellularLocation>
</comment>
<comment type="subcellular location">
    <molecule>Serine protease subunit NS2B</molecule>
    <subcellularLocation>
        <location>Host endoplasmic reticulum membrane</location>
        <topology evidence="6">Multi-pass membrane protein</topology>
    </subcellularLocation>
</comment>
<comment type="subcellular location">
    <molecule>Serine protease NS3</molecule>
    <subcellularLocation>
        <location evidence="15">Host endoplasmic reticulum membrane</location>
        <topology evidence="15">Peripheral membrane protein</topology>
        <orientation evidence="15">Cytoplasmic side</orientation>
    </subcellularLocation>
    <text evidence="15">Remains non-covalently associated to serine protease subunit NS2B.</text>
</comment>
<comment type="subcellular location">
    <molecule>Non-structural protein 4A</molecule>
    <subcellularLocation>
        <location evidence="6">Host endoplasmic reticulum membrane</location>
        <topology evidence="6">Multi-pass membrane protein</topology>
    </subcellularLocation>
    <text evidence="6">Located in RE-associated vesicles hosting the replication complex.</text>
</comment>
<comment type="subcellular location">
    <molecule>Non-structural protein 4B</molecule>
    <subcellularLocation>
        <location evidence="6">Host endoplasmic reticulum membrane</location>
        <topology evidence="6">Multi-pass membrane protein</topology>
    </subcellularLocation>
    <text evidence="10">Located in RE-derived vesicles hosting the replication complex.</text>
</comment>
<comment type="subcellular location">
    <molecule>RNA-directed RNA polymerase NS5</molecule>
    <subcellularLocation>
        <location>Host endoplasmic reticulum membrane</location>
        <topology>Peripheral membrane protein</topology>
        <orientation>Cytoplasmic side</orientation>
    </subcellularLocation>
    <subcellularLocation>
        <location evidence="6">Host nucleus</location>
    </subcellularLocation>
    <text evidence="6">Located in RE-associated vesicles hosting the replication complex. NS5 protein is mainly localized in the nucleus rather than in ER vesicles.</text>
</comment>
<comment type="domain">
    <text evidence="6">The transmembrane domains of the small envelope protein M and envelope protein E contain an endoplasmic reticulum retention signal.</text>
</comment>
<comment type="PTM">
    <molecule>Genome polyprotein</molecule>
    <text evidence="2">Specific enzymatic cleavages in vivo yield mature proteins. The nascent capsid protein C contains a C-terminal hydrophobic domain that act as a signal sequence for translocation of prM into the lumen of the ER. Mature capsid protein C is cleaved at a site upstream of this hydrophobic domain by NS3. prM is cleaved in post-Golgi vesicles by a host furin, releasing the mature small envelope protein M, and peptide pr. Non-structural protein 2A-alpha, a C-terminally truncated form of non-structural protein 2A, results from partial cleavage by NS3. Specific enzymatic cleavages in vivo yield mature proteins peptide 2K acts as a signal sequence and is removed from the N-terminus of NS4B by the host signal peptidase in the ER lumen. Signal cleavage at the 2K-4B site requires a prior NS3 protease-mediated cleavage at the 4A-2K site.</text>
</comment>
<comment type="PTM">
    <molecule>Protein prM</molecule>
    <text evidence="6">Cleaved in post-Golgi vesicles by a host furin, releasing the mature small envelope protein M, and peptide pr. This cleavage is incomplete as up to 30% of viral particles still carry uncleaved prM.</text>
</comment>
<comment type="PTM">
    <molecule>Envelope protein E</molecule>
    <text evidence="6">N-glycosylated.</text>
</comment>
<comment type="PTM">
    <molecule>Non-structural protein 1</molecule>
    <text evidence="6">N-glycosylated. The excreted form is glycosylated and this is required for efficient secretion of the protein from infected cells.</text>
</comment>
<comment type="PTM">
    <text evidence="2">Polyubiquitinated; ubiquitination is probably mediated by host TRIM23 and is prerequisite for NS5-STAT2 interaction. NS5 is not ISGylated or sumoylated.</text>
</comment>
<comment type="PTM">
    <molecule>Serine protease NS3</molecule>
    <text evidence="8">Acetylated by host KAT5. Acetylation modulates NS3 RNA-binding and unwinding activities and plays an important positive role for viral replication.</text>
</comment>
<comment type="PTM">
    <molecule>RNA-directed RNA polymerase NS5</molecule>
    <text evidence="6">Phosphorylated on serines residues. This phosphorylation may trigger NS5 nuclear localization.</text>
</comment>
<comment type="similarity">
    <text evidence="16">In the N-terminal section; belongs to the class I-like SAM-binding methyltransferase superfamily. mRNA cap 0-1 NS5-type methyltransferase family.</text>
</comment>
<keyword id="KW-0007">Acetylation</keyword>
<keyword id="KW-1072">Activation of host autophagy by virus</keyword>
<keyword id="KW-0067">ATP-binding</keyword>
<keyword id="KW-0167">Capsid protein</keyword>
<keyword id="KW-1165">Clathrin-mediated endocytosis of virus by host</keyword>
<keyword id="KW-0165">Cleavage on pair of basic residues</keyword>
<keyword id="KW-1015">Disulfide bond</keyword>
<keyword id="KW-1170">Fusion of virus membrane with host endosomal membrane</keyword>
<keyword id="KW-1168">Fusion of virus membrane with host membrane</keyword>
<keyword id="KW-0325">Glycoprotein</keyword>
<keyword id="KW-0342">GTP-binding</keyword>
<keyword id="KW-0347">Helicase</keyword>
<keyword id="KW-1035">Host cytoplasm</keyword>
<keyword id="KW-1038">Host endoplasmic reticulum</keyword>
<keyword id="KW-1043">Host membrane</keyword>
<keyword id="KW-1048">Host nucleus</keyword>
<keyword id="KW-0945">Host-virus interaction</keyword>
<keyword id="KW-0378">Hydrolase</keyword>
<keyword id="KW-1090">Inhibition of host innate immune response by virus</keyword>
<keyword id="KW-1114">Inhibition of host interferon signaling pathway by virus</keyword>
<keyword id="KW-1106">Inhibition of host STAT2 by virus</keyword>
<keyword id="KW-0922">Interferon antiviral system evasion</keyword>
<keyword id="KW-0472">Membrane</keyword>
<keyword id="KW-0479">Metal-binding</keyword>
<keyword id="KW-0489">Methyltransferase</keyword>
<keyword id="KW-0506">mRNA capping</keyword>
<keyword id="KW-0507">mRNA processing</keyword>
<keyword id="KW-0511">Multifunctional enzyme</keyword>
<keyword id="KW-0547">Nucleotide-binding</keyword>
<keyword id="KW-0548">Nucleotidyltransferase</keyword>
<keyword id="KW-0597">Phosphoprotein</keyword>
<keyword id="KW-0645">Protease</keyword>
<keyword id="KW-0694">RNA-binding</keyword>
<keyword id="KW-0696">RNA-directed RNA polymerase</keyword>
<keyword id="KW-0949">S-adenosyl-L-methionine</keyword>
<keyword id="KW-0964">Secreted</keyword>
<keyword id="KW-0720">Serine protease</keyword>
<keyword id="KW-0941">Suppressor of RNA silencing</keyword>
<keyword id="KW-0804">Transcription</keyword>
<keyword id="KW-0805">Transcription regulation</keyword>
<keyword id="KW-0808">Transferase</keyword>
<keyword id="KW-0812">Transmembrane</keyword>
<keyword id="KW-1133">Transmembrane helix</keyword>
<keyword id="KW-0832">Ubl conjugation</keyword>
<keyword id="KW-1161">Viral attachment to host cell</keyword>
<keyword id="KW-0261">Viral envelope protein</keyword>
<keyword id="KW-0899">Viral immunoevasion</keyword>
<keyword id="KW-1162">Viral penetration into host cytoplasm</keyword>
<keyword id="KW-0693">Viral RNA replication</keyword>
<keyword id="KW-0946">Virion</keyword>
<keyword id="KW-1164">Virus endocytosis by host</keyword>
<keyword id="KW-1160">Virus entry into host cell</keyword>
<keyword id="KW-0862">Zinc</keyword>
<feature type="chain" id="PRO_0000405156" description="Genome polyprotein">
    <location>
        <begin position="1"/>
        <end position="3411"/>
    </location>
</feature>
<feature type="chain" id="PRO_0000261470" description="Capsid protein C" evidence="2">
    <location>
        <begin position="1"/>
        <end position="101"/>
    </location>
</feature>
<feature type="propeptide" id="PRO_0000261471" description="ER anchor for the capsid protein C, removed in mature form by serine protease NS3" evidence="2">
    <location>
        <begin position="102"/>
        <end position="121"/>
    </location>
</feature>
<feature type="chain" id="PRO_0000261472" description="Protein prM" evidence="7">
    <location>
        <begin position="122"/>
        <end position="285"/>
    </location>
</feature>
<feature type="chain" id="PRO_0000261473" description="Peptide pr" evidence="7">
    <location>
        <begin position="122"/>
        <end position="210"/>
    </location>
</feature>
<feature type="chain" id="PRO_0000261474" description="Small envelope protein M" evidence="7">
    <location>
        <begin position="211"/>
        <end position="285"/>
    </location>
</feature>
<feature type="chain" id="PRO_0000261475" description="Envelope protein E" evidence="7">
    <location>
        <begin position="286"/>
        <end position="778"/>
    </location>
</feature>
<feature type="chain" id="PRO_0000261476" description="Non-structural protein 1" evidence="2">
    <location>
        <begin position="779"/>
        <end position="1130"/>
    </location>
</feature>
<feature type="chain" id="PRO_0000261477" description="Non-structural protein 2A" evidence="7">
    <location>
        <begin position="1131"/>
        <end position="1354"/>
    </location>
</feature>
<feature type="chain" id="PRO_0000261478" description="Non-structural protein 2A-alpha" evidence="7">
    <location>
        <begin position="1131"/>
        <end position="1320"/>
    </location>
</feature>
<feature type="chain" id="PRO_0000261479" description="Serine protease subunit NS2B" evidence="2">
    <location>
        <begin position="1355"/>
        <end position="1484"/>
    </location>
</feature>
<feature type="chain" id="PRO_0000261480" description="Serine protease NS3" evidence="2">
    <location>
        <begin position="1485"/>
        <end position="2107"/>
    </location>
</feature>
<feature type="chain" id="PRO_0000261481" description="Non-structural protein 4A" evidence="2">
    <location>
        <begin position="2108"/>
        <end position="2233"/>
    </location>
</feature>
<feature type="peptide" id="PRO_0000261482" description="Peptide 2k" evidence="2">
    <location>
        <begin position="2234"/>
        <end position="2256"/>
    </location>
</feature>
<feature type="chain" id="PRO_0000261483" description="Non-structural protein 4B" evidence="2">
    <location>
        <begin position="2257"/>
        <end position="2506"/>
    </location>
</feature>
<feature type="chain" id="PRO_0000261484" description="RNA-directed RNA polymerase NS5" evidence="2">
    <location>
        <begin position="2507"/>
        <end position="3411"/>
    </location>
</feature>
<feature type="topological domain" description="Cytoplasmic" evidence="11">
    <location>
        <begin position="1"/>
        <end position="104"/>
    </location>
</feature>
<feature type="transmembrane region" description="Helical" evidence="11">
    <location>
        <begin position="105"/>
        <end position="125"/>
    </location>
</feature>
<feature type="topological domain" description="Extracellular" evidence="11">
    <location>
        <begin position="126"/>
        <end position="244"/>
    </location>
</feature>
<feature type="transmembrane region" description="Helical" evidence="11">
    <location>
        <begin position="245"/>
        <end position="265"/>
    </location>
</feature>
<feature type="topological domain" description="Cytoplasmic" evidence="11">
    <location>
        <begin position="266"/>
        <end position="270"/>
    </location>
</feature>
<feature type="transmembrane region" description="Helical" evidence="11">
    <location>
        <begin position="271"/>
        <end position="285"/>
    </location>
</feature>
<feature type="topological domain" description="Extracellular" evidence="11">
    <location>
        <begin position="286"/>
        <end position="730"/>
    </location>
</feature>
<feature type="transmembrane region" description="Helical" evidence="11">
    <location>
        <begin position="731"/>
        <end position="751"/>
    </location>
</feature>
<feature type="topological domain" description="Extracellular" evidence="11">
    <location>
        <begin position="752"/>
        <end position="757"/>
    </location>
</feature>
<feature type="transmembrane region" description="Helical" evidence="11">
    <location>
        <begin position="758"/>
        <end position="778"/>
    </location>
</feature>
<feature type="topological domain" description="Extracellular" evidence="2">
    <location>
        <begin position="779"/>
        <end position="1132"/>
    </location>
</feature>
<feature type="transmembrane region" description="Helical" evidence="2">
    <location>
        <begin position="1133"/>
        <end position="1153"/>
    </location>
</feature>
<feature type="topological domain" description="Cytoplasmic" evidence="2">
    <location>
        <begin position="1154"/>
        <end position="1201"/>
    </location>
</feature>
<feature type="transmembrane region" description="Helical" evidence="2">
    <location>
        <begin position="1202"/>
        <end position="1222"/>
    </location>
</feature>
<feature type="topological domain" description="Lumenal" evidence="2">
    <location>
        <begin position="1223"/>
        <end position="1287"/>
    </location>
</feature>
<feature type="transmembrane region" description="Helical" evidence="2">
    <location>
        <begin position="1288"/>
        <end position="1308"/>
    </location>
</feature>
<feature type="topological domain" description="Cytoplasmic" evidence="2">
    <location>
        <begin position="1309"/>
        <end position="1355"/>
    </location>
</feature>
<feature type="transmembrane region" description="Helical" evidence="2">
    <location>
        <begin position="1356"/>
        <end position="1376"/>
    </location>
</feature>
<feature type="topological domain" description="Lumenal" evidence="2">
    <location>
        <begin position="1377"/>
        <end position="1378"/>
    </location>
</feature>
<feature type="transmembrane region" description="Helical" evidence="11">
    <location>
        <begin position="1379"/>
        <end position="1399"/>
    </location>
</feature>
<feature type="topological domain" description="Cytoplasmic" evidence="11">
    <location>
        <begin position="1400"/>
        <end position="1456"/>
    </location>
</feature>
<feature type="intramembrane region" description="Helical" evidence="11">
    <location>
        <begin position="1457"/>
        <end position="1477"/>
    </location>
</feature>
<feature type="topological domain" description="Cytoplasmic" evidence="11">
    <location>
        <begin position="1478"/>
        <end position="2157"/>
    </location>
</feature>
<feature type="transmembrane region" description="Helical" evidence="11">
    <location>
        <begin position="2158"/>
        <end position="2178"/>
    </location>
</feature>
<feature type="topological domain" description="Lumenal" evidence="11">
    <location>
        <begin position="2179"/>
        <end position="2186"/>
    </location>
</feature>
<feature type="intramembrane region" description="Helical" evidence="11">
    <location>
        <begin position="2187"/>
        <end position="2207"/>
    </location>
</feature>
<feature type="topological domain" description="Lumenal" evidence="11">
    <location>
        <begin position="2208"/>
        <end position="2209"/>
    </location>
</feature>
<feature type="transmembrane region" description="Helical" evidence="11">
    <location>
        <begin position="2210"/>
        <end position="2230"/>
    </location>
</feature>
<feature type="topological domain" description="Cytoplasmic" evidence="11">
    <location>
        <begin position="2231"/>
        <end position="2241"/>
    </location>
</feature>
<feature type="transmembrane region" description="Helical; Note=Signal for NS4B" evidence="11">
    <location>
        <begin position="2242"/>
        <end position="2262"/>
    </location>
</feature>
<feature type="topological domain" description="Lumenal" evidence="11">
    <location>
        <begin position="2263"/>
        <end position="2293"/>
    </location>
</feature>
<feature type="intramembrane region" description="Helical" evidence="11">
    <location>
        <begin position="2294"/>
        <end position="2314"/>
    </location>
</feature>
<feature type="topological domain" description="Lumenal" evidence="11">
    <location>
        <begin position="2315"/>
        <end position="2360"/>
    </location>
</feature>
<feature type="transmembrane region" description="Helical" evidence="11">
    <location>
        <begin position="2361"/>
        <end position="2380"/>
    </location>
</feature>
<feature type="topological domain" description="Cytoplasmic" evidence="11">
    <location>
        <begin position="2381"/>
        <end position="2421"/>
    </location>
</feature>
<feature type="transmembrane region" description="Helical" evidence="11">
    <location>
        <begin position="2422"/>
        <end position="2442"/>
    </location>
</feature>
<feature type="topological domain" description="Lumenal" evidence="11">
    <location>
        <begin position="2443"/>
        <end position="2445"/>
    </location>
</feature>
<feature type="transmembrane region" description="Helical" evidence="11">
    <location>
        <begin position="2446"/>
        <end position="2466"/>
    </location>
</feature>
<feature type="topological domain" description="Cytoplasmic" evidence="11">
    <location>
        <begin position="2467"/>
        <end position="3411"/>
    </location>
</feature>
<feature type="domain" description="Peptidase S7" evidence="15">
    <location>
        <begin position="1485"/>
        <end position="1665"/>
    </location>
</feature>
<feature type="domain" description="Helicase ATP-binding" evidence="13">
    <location>
        <begin position="1669"/>
        <end position="1825"/>
    </location>
</feature>
<feature type="domain" description="Helicase C-terminal">
    <location>
        <begin position="1820"/>
        <end position="1997"/>
    </location>
</feature>
<feature type="domain" description="mRNA cap 0-1 NS5-type MT" evidence="16">
    <location>
        <begin position="2507"/>
        <end position="2771"/>
    </location>
</feature>
<feature type="domain" description="RdRp catalytic" evidence="12">
    <location>
        <begin position="3035"/>
        <end position="3187"/>
    </location>
</feature>
<feature type="region of interest" description="Hydrophobic; homodimerization of capsid protein C" evidence="7">
    <location>
        <begin position="38"/>
        <end position="72"/>
    </location>
</feature>
<feature type="region of interest" description="Fusion peptide" evidence="4">
    <location>
        <begin position="383"/>
        <end position="396"/>
    </location>
</feature>
<feature type="region of interest" description="Interacts with and activates NS3 protease" evidence="14">
    <location>
        <begin position="1407"/>
        <end position="1446"/>
    </location>
</feature>
<feature type="region of interest" description="Important for RNA-binding" evidence="5">
    <location>
        <begin position="1673"/>
        <end position="1676"/>
    </location>
</feature>
<feature type="short sequence motif" description="DEAH box" evidence="13">
    <location>
        <begin position="1773"/>
        <end position="1776"/>
    </location>
</feature>
<feature type="short sequence motif" description="Nuclear localization signal" evidence="1">
    <location>
        <begin position="2878"/>
        <end position="2911"/>
    </location>
</feature>
<feature type="active site" description="Charge relay system; for serine protease NS3 activity" evidence="15">
    <location>
        <position position="1537"/>
    </location>
</feature>
<feature type="active site" description="Charge relay system; for serine protease NS3 activity" evidence="15">
    <location>
        <position position="1561"/>
    </location>
</feature>
<feature type="active site" description="Charge relay system; for serine protease NS3 activity" evidence="15">
    <location>
        <position position="1622"/>
    </location>
</feature>
<feature type="active site" description="For 2'-O-MTase activity" evidence="9">
    <location>
        <position position="2567"/>
    </location>
</feature>
<feature type="active site" description="For 2'-O-MTase activity" evidence="9">
    <location>
        <position position="2652"/>
    </location>
</feature>
<feature type="active site" description="For 2'-O-MTase activity" evidence="9">
    <location>
        <position position="2688"/>
    </location>
</feature>
<feature type="active site" description="For 2'-O-MTase activity" evidence="9">
    <location>
        <position position="2724"/>
    </location>
</feature>
<feature type="binding site" evidence="13">
    <location>
        <begin position="1682"/>
        <end position="1689"/>
    </location>
    <ligand>
        <name>ATP</name>
        <dbReference type="ChEBI" id="CHEBI:30616"/>
    </ligand>
</feature>
<feature type="binding site" evidence="16">
    <location>
        <position position="2562"/>
    </location>
    <ligand>
        <name>S-adenosyl-L-methionine</name>
        <dbReference type="ChEBI" id="CHEBI:59789"/>
    </ligand>
</feature>
<feature type="binding site" evidence="16">
    <location>
        <position position="2592"/>
    </location>
    <ligand>
        <name>S-adenosyl-L-methionine</name>
        <dbReference type="ChEBI" id="CHEBI:59789"/>
    </ligand>
</feature>
<feature type="binding site" evidence="16">
    <location>
        <position position="2593"/>
    </location>
    <ligand>
        <name>S-adenosyl-L-methionine</name>
        <dbReference type="ChEBI" id="CHEBI:59789"/>
    </ligand>
</feature>
<feature type="binding site" evidence="16">
    <location>
        <position position="2610"/>
    </location>
    <ligand>
        <name>S-adenosyl-L-methionine</name>
        <dbReference type="ChEBI" id="CHEBI:59789"/>
    </ligand>
</feature>
<feature type="binding site" evidence="16">
    <location>
        <position position="2611"/>
    </location>
    <ligand>
        <name>S-adenosyl-L-methionine</name>
        <dbReference type="ChEBI" id="CHEBI:59789"/>
    </ligand>
</feature>
<feature type="binding site" evidence="16">
    <location>
        <position position="2637"/>
    </location>
    <ligand>
        <name>S-adenosyl-L-methionine</name>
        <dbReference type="ChEBI" id="CHEBI:59789"/>
    </ligand>
</feature>
<feature type="binding site" evidence="16">
    <location>
        <position position="2638"/>
    </location>
    <ligand>
        <name>S-adenosyl-L-methionine</name>
        <dbReference type="ChEBI" id="CHEBI:59789"/>
    </ligand>
</feature>
<feature type="binding site" evidence="16">
    <location>
        <position position="2653"/>
    </location>
    <ligand>
        <name>S-adenosyl-L-methionine</name>
        <dbReference type="ChEBI" id="CHEBI:59789"/>
    </ligand>
</feature>
<feature type="binding site" evidence="16">
    <location>
        <position position="2726"/>
    </location>
    <ligand>
        <name>S-adenosyl-L-methionine</name>
        <dbReference type="ChEBI" id="CHEBI:59789"/>
    </ligand>
</feature>
<feature type="binding site" evidence="3">
    <location>
        <position position="2945"/>
    </location>
    <ligand>
        <name>Zn(2+)</name>
        <dbReference type="ChEBI" id="CHEBI:29105"/>
        <label>1</label>
    </ligand>
</feature>
<feature type="binding site" evidence="3">
    <location>
        <position position="2949"/>
    </location>
    <ligand>
        <name>Zn(2+)</name>
        <dbReference type="ChEBI" id="CHEBI:29105"/>
        <label>1</label>
    </ligand>
</feature>
<feature type="binding site" evidence="3">
    <location>
        <position position="2954"/>
    </location>
    <ligand>
        <name>Zn(2+)</name>
        <dbReference type="ChEBI" id="CHEBI:29105"/>
        <label>1</label>
    </ligand>
</feature>
<feature type="binding site" evidence="3">
    <location>
        <position position="2957"/>
    </location>
    <ligand>
        <name>Zn(2+)</name>
        <dbReference type="ChEBI" id="CHEBI:29105"/>
        <label>1</label>
    </ligand>
</feature>
<feature type="binding site" evidence="3">
    <location>
        <position position="3222"/>
    </location>
    <ligand>
        <name>Zn(2+)</name>
        <dbReference type="ChEBI" id="CHEBI:29105"/>
        <label>2</label>
    </ligand>
</feature>
<feature type="binding site" evidence="3">
    <location>
        <position position="3238"/>
    </location>
    <ligand>
        <name>Zn(2+)</name>
        <dbReference type="ChEBI" id="CHEBI:29105"/>
        <label>2</label>
    </ligand>
</feature>
<feature type="binding site" evidence="3">
    <location>
        <position position="3357"/>
    </location>
    <ligand>
        <name>Zn(2+)</name>
        <dbReference type="ChEBI" id="CHEBI:29105"/>
        <label>2</label>
    </ligand>
</feature>
<feature type="site" description="Cleavage; by viral protease NS3" evidence="2">
    <location>
        <begin position="101"/>
        <end position="102"/>
    </location>
</feature>
<feature type="site" description="Cleavage; by host signal peptidase" evidence="2">
    <location>
        <begin position="121"/>
        <end position="122"/>
    </location>
</feature>
<feature type="site" description="Cleavage; by host furin" evidence="7">
    <location>
        <begin position="210"/>
        <end position="211"/>
    </location>
</feature>
<feature type="site" description="Cleavage; by host signal peptidase" evidence="7">
    <location>
        <begin position="285"/>
        <end position="286"/>
    </location>
</feature>
<feature type="site" description="Cleavage; by host signal peptidase" evidence="2">
    <location>
        <begin position="778"/>
        <end position="779"/>
    </location>
</feature>
<feature type="site" description="Cleavage; by host" evidence="7">
    <location>
        <begin position="1130"/>
        <end position="1131"/>
    </location>
</feature>
<feature type="site" description="Cleavage; by viral protease NS3" evidence="7">
    <location>
        <begin position="1354"/>
        <end position="1355"/>
    </location>
</feature>
<feature type="site" description="Cleavage; by autolysis" evidence="2">
    <location>
        <begin position="1484"/>
        <end position="1485"/>
    </location>
</feature>
<feature type="site" description="Involved in NS3 ATPase and RTPase activities" evidence="3">
    <location>
        <position position="1945"/>
    </location>
</feature>
<feature type="site" description="Involved in NS3 ATPase and RTPase activities" evidence="3">
    <location>
        <position position="1948"/>
    </location>
</feature>
<feature type="site" description="Cleavage; by autolysis" evidence="2">
    <location>
        <begin position="2107"/>
        <end position="2108"/>
    </location>
</feature>
<feature type="site" description="Cleavage; by viral protease NS3" evidence="7">
    <location>
        <begin position="2233"/>
        <end position="2234"/>
    </location>
</feature>
<feature type="site" description="Cleavage; by host signal peptidase" evidence="7">
    <location>
        <begin position="2256"/>
        <end position="2257"/>
    </location>
</feature>
<feature type="site" description="Cleavage; by viral protease NS3" evidence="2">
    <location>
        <begin position="2506"/>
        <end position="2507"/>
    </location>
</feature>
<feature type="site" description="mRNA cap binding" evidence="16">
    <location>
        <position position="2519"/>
    </location>
</feature>
<feature type="site" description="mRNA cap binding; via carbonyl oxygen" evidence="16">
    <location>
        <position position="2522"/>
    </location>
</feature>
<feature type="site" description="mRNA cap binding" evidence="16">
    <location>
        <position position="2523"/>
    </location>
</feature>
<feature type="site" description="mRNA cap binding; via carbonyl oxygen" evidence="16">
    <location>
        <position position="2525"/>
    </location>
</feature>
<feature type="site" description="mRNA cap binding" evidence="16">
    <location>
        <position position="2530"/>
    </location>
</feature>
<feature type="site" description="mRNA cap binding" evidence="16">
    <location>
        <position position="2534"/>
    </location>
</feature>
<feature type="site" description="Essential for 2'-O-methyltransferase activity" evidence="16">
    <location>
        <position position="2567"/>
    </location>
</feature>
<feature type="site" description="Essential for 2'-O-methyltransferase and N-7 methyltransferase activity" evidence="16">
    <location>
        <position position="2652"/>
    </location>
</feature>
<feature type="site" description="mRNA cap binding" evidence="16">
    <location>
        <position position="2656"/>
    </location>
</feature>
<feature type="site" description="Essential for 2'-O-methyltransferase activity" evidence="16">
    <location>
        <position position="2688"/>
    </location>
</feature>
<feature type="site" description="mRNA cap binding" evidence="16">
    <location>
        <position position="2719"/>
    </location>
</feature>
<feature type="site" description="mRNA cap binding" evidence="16">
    <location>
        <position position="2721"/>
    </location>
</feature>
<feature type="site" description="Essential for 2'-O-methyltransferase activity" evidence="16">
    <location>
        <position position="2724"/>
    </location>
</feature>
<feature type="modified residue" description="N6-acetyllysine; by host" evidence="8">
    <location>
        <position position="1877"/>
    </location>
</feature>
<feature type="modified residue" description="Phosphoserine" evidence="2">
    <location>
        <position position="2562"/>
    </location>
</feature>
<feature type="glycosylation site" description="N-linked (GlcNAc...) asparagine; by host" evidence="11">
    <location>
        <position position="134"/>
    </location>
</feature>
<feature type="glycosylation site" description="N-linked (GlcNAc...) asparagine; by host" evidence="11">
    <location>
        <position position="150"/>
    </location>
</feature>
<feature type="glycosylation site" description="N-linked (GlcNAc...) asparagine; by host" evidence="11">
    <location>
        <position position="908"/>
    </location>
</feature>
<feature type="glycosylation site" description="N-linked (GlcNAc...) asparagine; by host" evidence="11">
    <location>
        <position position="986"/>
    </location>
</feature>
<feature type="disulfide bond" evidence="6">
    <location>
        <begin position="288"/>
        <end position="315"/>
    </location>
</feature>
<feature type="disulfide bond" evidence="6">
    <location>
        <begin position="345"/>
        <end position="406"/>
    </location>
</feature>
<feature type="disulfide bond" evidence="1">
    <location>
        <begin position="345"/>
        <end position="401"/>
    </location>
</feature>
<feature type="disulfide bond" evidence="6">
    <location>
        <begin position="359"/>
        <end position="390"/>
    </location>
</feature>
<feature type="disulfide bond" evidence="1">
    <location>
        <begin position="377"/>
        <end position="406"/>
    </location>
</feature>
<feature type="disulfide bond" evidence="6">
    <location>
        <begin position="377"/>
        <end position="401"/>
    </location>
</feature>
<feature type="disulfide bond" evidence="6">
    <location>
        <begin position="467"/>
        <end position="568"/>
    </location>
</feature>
<feature type="disulfide bond" evidence="6">
    <location>
        <begin position="585"/>
        <end position="615"/>
    </location>
</feature>
<feature type="disulfide bond" evidence="6">
    <location>
        <begin position="782"/>
        <end position="793"/>
    </location>
</feature>
<feature type="disulfide bond" evidence="6">
    <location>
        <begin position="833"/>
        <end position="921"/>
    </location>
</feature>
<feature type="disulfide bond" evidence="6">
    <location>
        <begin position="957"/>
        <end position="1002"/>
    </location>
</feature>
<feature type="disulfide bond" evidence="6">
    <location>
        <begin position="1058"/>
        <end position="1107"/>
    </location>
</feature>
<feature type="disulfide bond" evidence="6">
    <location>
        <begin position="1069"/>
        <end position="1091"/>
    </location>
</feature>
<feature type="disulfide bond" evidence="6">
    <location>
        <begin position="1090"/>
        <end position="1094"/>
    </location>
</feature>
<organismHost>
    <name type="scientific">Aedes aegypti</name>
    <name type="common">Yellowfever mosquito</name>
    <name type="synonym">Culex aegypti</name>
    <dbReference type="NCBI Taxonomy" id="7159"/>
</organismHost>
<organismHost>
    <name type="scientific">Aedes luteocephalus</name>
    <name type="common">Mosquito</name>
    <dbReference type="NCBI Taxonomy" id="299629"/>
</organismHost>
<organismHost>
    <name type="scientific">Aedes simpsoni</name>
    <dbReference type="NCBI Taxonomy" id="7161"/>
</organismHost>
<organismHost>
    <name type="scientific">Homo sapiens</name>
    <name type="common">Human</name>
    <dbReference type="NCBI Taxonomy" id="9606"/>
</organismHost>
<organismHost>
    <name type="scientific">Simiiformes</name>
    <dbReference type="NCBI Taxonomy" id="314293"/>
</organismHost>